<evidence type="ECO:0000255" key="1">
    <source>
        <dbReference type="HAMAP-Rule" id="MF_00600"/>
    </source>
</evidence>
<evidence type="ECO:0000269" key="2">
    <source>
    </source>
</evidence>
<evidence type="ECO:0000305" key="3"/>
<protein>
    <recommendedName>
        <fullName evidence="1">Chaperonin GroEL</fullName>
        <ecNumber evidence="1">5.6.1.7</ecNumber>
    </recommendedName>
    <alternativeName>
        <fullName evidence="1">60 kDa chaperonin</fullName>
    </alternativeName>
    <alternativeName>
        <fullName evidence="1">Chaperonin-60</fullName>
        <shortName evidence="1">Cpn60</shortName>
    </alternativeName>
</protein>
<proteinExistence type="evidence at protein level"/>
<dbReference type="EC" id="5.6.1.7" evidence="1"/>
<dbReference type="EMBL" id="U56021">
    <property type="protein sequence ID" value="AAB00559.1"/>
    <property type="molecule type" value="Genomic_DNA"/>
</dbReference>
<dbReference type="PIR" id="S72614">
    <property type="entry name" value="S72614"/>
</dbReference>
<dbReference type="SMR" id="Q60024"/>
<dbReference type="GO" id="GO:0005737">
    <property type="term" value="C:cytoplasm"/>
    <property type="evidence" value="ECO:0007669"/>
    <property type="project" value="UniProtKB-SubCell"/>
</dbReference>
<dbReference type="GO" id="GO:0005524">
    <property type="term" value="F:ATP binding"/>
    <property type="evidence" value="ECO:0007669"/>
    <property type="project" value="UniProtKB-UniRule"/>
</dbReference>
<dbReference type="GO" id="GO:0140662">
    <property type="term" value="F:ATP-dependent protein folding chaperone"/>
    <property type="evidence" value="ECO:0007669"/>
    <property type="project" value="InterPro"/>
</dbReference>
<dbReference type="GO" id="GO:0016853">
    <property type="term" value="F:isomerase activity"/>
    <property type="evidence" value="ECO:0007669"/>
    <property type="project" value="UniProtKB-KW"/>
</dbReference>
<dbReference type="GO" id="GO:0051082">
    <property type="term" value="F:unfolded protein binding"/>
    <property type="evidence" value="ECO:0007669"/>
    <property type="project" value="UniProtKB-UniRule"/>
</dbReference>
<dbReference type="GO" id="GO:0042026">
    <property type="term" value="P:protein refolding"/>
    <property type="evidence" value="ECO:0007669"/>
    <property type="project" value="UniProtKB-UniRule"/>
</dbReference>
<dbReference type="CDD" id="cd03344">
    <property type="entry name" value="GroEL"/>
    <property type="match status" value="1"/>
</dbReference>
<dbReference type="FunFam" id="3.50.7.10:FF:000001">
    <property type="entry name" value="60 kDa chaperonin"/>
    <property type="match status" value="1"/>
</dbReference>
<dbReference type="Gene3D" id="3.50.7.10">
    <property type="entry name" value="GroEL"/>
    <property type="match status" value="1"/>
</dbReference>
<dbReference type="Gene3D" id="1.10.560.10">
    <property type="entry name" value="GroEL-like equatorial domain"/>
    <property type="match status" value="1"/>
</dbReference>
<dbReference type="Gene3D" id="3.30.260.10">
    <property type="entry name" value="TCP-1-like chaperonin intermediate domain"/>
    <property type="match status" value="1"/>
</dbReference>
<dbReference type="HAMAP" id="MF_00600">
    <property type="entry name" value="CH60"/>
    <property type="match status" value="1"/>
</dbReference>
<dbReference type="InterPro" id="IPR018370">
    <property type="entry name" value="Chaperonin_Cpn60_CS"/>
</dbReference>
<dbReference type="InterPro" id="IPR001844">
    <property type="entry name" value="Cpn60/GroEL"/>
</dbReference>
<dbReference type="InterPro" id="IPR002423">
    <property type="entry name" value="Cpn60/GroEL/TCP-1"/>
</dbReference>
<dbReference type="InterPro" id="IPR027409">
    <property type="entry name" value="GroEL-like_apical_dom_sf"/>
</dbReference>
<dbReference type="InterPro" id="IPR027413">
    <property type="entry name" value="GROEL-like_equatorial_sf"/>
</dbReference>
<dbReference type="InterPro" id="IPR027410">
    <property type="entry name" value="TCP-1-like_intermed_sf"/>
</dbReference>
<dbReference type="NCBIfam" id="TIGR02348">
    <property type="entry name" value="GroEL"/>
    <property type="match status" value="1"/>
</dbReference>
<dbReference type="NCBIfam" id="NF000592">
    <property type="entry name" value="PRK00013.1"/>
    <property type="match status" value="1"/>
</dbReference>
<dbReference type="NCBIfam" id="NF009487">
    <property type="entry name" value="PRK12849.1"/>
    <property type="match status" value="1"/>
</dbReference>
<dbReference type="NCBIfam" id="NF009488">
    <property type="entry name" value="PRK12850.1"/>
    <property type="match status" value="1"/>
</dbReference>
<dbReference type="NCBIfam" id="NF009489">
    <property type="entry name" value="PRK12851.1"/>
    <property type="match status" value="1"/>
</dbReference>
<dbReference type="PANTHER" id="PTHR45633">
    <property type="entry name" value="60 KDA HEAT SHOCK PROTEIN, MITOCHONDRIAL"/>
    <property type="match status" value="1"/>
</dbReference>
<dbReference type="Pfam" id="PF00118">
    <property type="entry name" value="Cpn60_TCP1"/>
    <property type="match status" value="1"/>
</dbReference>
<dbReference type="PRINTS" id="PR00298">
    <property type="entry name" value="CHAPERONIN60"/>
</dbReference>
<dbReference type="SUPFAM" id="SSF52029">
    <property type="entry name" value="GroEL apical domain-like"/>
    <property type="match status" value="1"/>
</dbReference>
<dbReference type="SUPFAM" id="SSF48592">
    <property type="entry name" value="GroEL equatorial domain-like"/>
    <property type="match status" value="1"/>
</dbReference>
<dbReference type="SUPFAM" id="SSF54849">
    <property type="entry name" value="GroEL-intermediate domain like"/>
    <property type="match status" value="1"/>
</dbReference>
<dbReference type="PROSITE" id="PS00296">
    <property type="entry name" value="CHAPERONINS_CPN60"/>
    <property type="match status" value="1"/>
</dbReference>
<reference key="1">
    <citation type="journal article" date="1998" name="Gene">
        <title>Sequence analysis and heterologous expression of the groE genes from Thermoanaerobacter sp. Rt8.G4.</title>
        <authorList>
            <person name="Truscott K.N."/>
            <person name="Scopes R.K."/>
        </authorList>
    </citation>
    <scope>NUCLEOTIDE SEQUENCE [GENOMIC DNA]</scope>
    <source>
        <strain>RT8.G4</strain>
    </source>
</reference>
<reference key="2">
    <citation type="journal article" date="1994" name="Eur. J. Biochem.">
        <title>Purification and characterization of chaperonin 60 and chaperonin 10 from the anaerobic thermophile Thermoanaerobacter brockii.</title>
        <authorList>
            <person name="Truscott K.N."/>
            <person name="Hoej P.B."/>
            <person name="Scopes R.K."/>
        </authorList>
    </citation>
    <scope>PROTEIN SEQUENCE OF 2-44</scope>
    <scope>CHARACTERIZATION</scope>
    <scope>MASS SPECTROMETRY</scope>
    <source>
        <strain>RT8.G4</strain>
    </source>
</reference>
<organism>
    <name type="scientific">Thermoanaerobacter brockii</name>
    <name type="common">Thermoanaerobium brockii</name>
    <dbReference type="NCBI Taxonomy" id="29323"/>
    <lineage>
        <taxon>Bacteria</taxon>
        <taxon>Bacillati</taxon>
        <taxon>Bacillota</taxon>
        <taxon>Clostridia</taxon>
        <taxon>Thermoanaerobacterales</taxon>
        <taxon>Thermoanaerobacteraceae</taxon>
        <taxon>Thermoanaerobacter</taxon>
    </lineage>
</organism>
<keyword id="KW-0067">ATP-binding</keyword>
<keyword id="KW-0143">Chaperone</keyword>
<keyword id="KW-0963">Cytoplasm</keyword>
<keyword id="KW-0903">Direct protein sequencing</keyword>
<keyword id="KW-0413">Isomerase</keyword>
<keyword id="KW-0547">Nucleotide-binding</keyword>
<sequence>MAKQIKYGEEARRALERGVNAVADTVKVTLGPRGRNVVLDKKYGSPTVTNDGVTIAREIELEDPFENQGAQLLKEAATKTNDIAGDGTTTATLLAQAMVREGLKNLAAGANPMLLRRGIAKAVDAAVEGLKRISKPIDNKESIAHVASISAADEEIGKLIAEAMDKVGKDGVITVEESKTLGTTLEVVEGMQFDRGYISPYMVTDAEKMEAVLEEPVILITDKKISNIQDLLPLLEQIVQQGKKLLIIADDVEGEALATLIVNKLRGTFTCVAVKAPGFGDRRKEMLQDIAILTGGQVISEELGYDLKDVRLDMLGRARQVKVTKEYTTIVGGAGDPSEIKKRVNQIKAQIEETTSDYDREKLQERLAKLAGGVAVIQAGAATETELKEKKHRIEDALAATKAAVEEGIVPGGGIALLNVIEDVQKVVDSLEGDFKTGAKIVLRALEEPVRQIATNAGVDGSVIVEKIKAAKDPNFGYDAYKEEFTDMFKAGIVDPTKVTRTALQNAASIASMILTTEAIVVDIPEKNTGMPNPGAGMDMM</sequence>
<accession>Q60024</accession>
<name>CH60_THEBR</name>
<comment type="function">
    <text evidence="1">Together with its co-chaperonin GroES, plays an essential role in assisting protein folding. The GroEL-GroES system forms a nano-cage that allows encapsulation of the non-native substrate proteins and provides a physical environment optimized to promote and accelerate protein folding.</text>
</comment>
<comment type="catalytic activity">
    <reaction evidence="1">
        <text>ATP + H2O + a folded polypeptide = ADP + phosphate + an unfolded polypeptide.</text>
        <dbReference type="EC" id="5.6.1.7"/>
    </reaction>
</comment>
<comment type="subunit">
    <text evidence="1">Forms a cylinder of 14 subunits composed of two heptameric rings stacked back-to-back. Interacts with the co-chaperonin GroES.</text>
</comment>
<comment type="subcellular location">
    <subcellularLocation>
        <location evidence="1">Cytoplasm</location>
    </subcellularLocation>
</comment>
<comment type="mass spectrometry"/>
<comment type="similarity">
    <text evidence="1">Belongs to the chaperonin (HSP60) family.</text>
</comment>
<feature type="initiator methionine" description="Removed" evidence="2">
    <location>
        <position position="1"/>
    </location>
</feature>
<feature type="chain" id="PRO_0000063578" description="Chaperonin GroEL">
    <location>
        <begin position="2"/>
        <end position="541"/>
    </location>
</feature>
<feature type="binding site" evidence="1">
    <location>
        <begin position="29"/>
        <end position="32"/>
    </location>
    <ligand>
        <name>ATP</name>
        <dbReference type="ChEBI" id="CHEBI:30616"/>
    </ligand>
</feature>
<feature type="binding site" evidence="1">
    <location>
        <begin position="86"/>
        <end position="90"/>
    </location>
    <ligand>
        <name>ATP</name>
        <dbReference type="ChEBI" id="CHEBI:30616"/>
    </ligand>
</feature>
<feature type="binding site" evidence="1">
    <location>
        <position position="413"/>
    </location>
    <ligand>
        <name>ATP</name>
        <dbReference type="ChEBI" id="CHEBI:30616"/>
    </ligand>
</feature>
<feature type="binding site" evidence="1">
    <location>
        <position position="495"/>
    </location>
    <ligand>
        <name>ATP</name>
        <dbReference type="ChEBI" id="CHEBI:30616"/>
    </ligand>
</feature>
<feature type="sequence conflict" description="In Ref. 2; AA sequence." evidence="3" ref="2">
    <original>G</original>
    <variation>A</variation>
    <location>
        <position position="44"/>
    </location>
</feature>
<gene>
    <name evidence="1" type="primary">groEL</name>
    <name evidence="1" type="synonym">groL</name>
    <name type="synonym">mopA</name>
</gene>